<feature type="chain" id="PRO_0000150144" description="Phosphoserine aminotransferase">
    <location>
        <begin position="1"/>
        <end position="360"/>
    </location>
</feature>
<feature type="binding site" evidence="1">
    <location>
        <position position="42"/>
    </location>
    <ligand>
        <name>L-glutamate</name>
        <dbReference type="ChEBI" id="CHEBI:29985"/>
    </ligand>
</feature>
<feature type="binding site" evidence="1">
    <location>
        <begin position="76"/>
        <end position="77"/>
    </location>
    <ligand>
        <name>pyridoxal 5'-phosphate</name>
        <dbReference type="ChEBI" id="CHEBI:597326"/>
    </ligand>
</feature>
<feature type="binding site" evidence="1">
    <location>
        <position position="102"/>
    </location>
    <ligand>
        <name>pyridoxal 5'-phosphate</name>
        <dbReference type="ChEBI" id="CHEBI:597326"/>
    </ligand>
</feature>
<feature type="binding site" evidence="1">
    <location>
        <position position="152"/>
    </location>
    <ligand>
        <name>pyridoxal 5'-phosphate</name>
        <dbReference type="ChEBI" id="CHEBI:597326"/>
    </ligand>
</feature>
<feature type="binding site" evidence="1">
    <location>
        <position position="172"/>
    </location>
    <ligand>
        <name>pyridoxal 5'-phosphate</name>
        <dbReference type="ChEBI" id="CHEBI:597326"/>
    </ligand>
</feature>
<feature type="binding site" evidence="1">
    <location>
        <position position="195"/>
    </location>
    <ligand>
        <name>pyridoxal 5'-phosphate</name>
        <dbReference type="ChEBI" id="CHEBI:597326"/>
    </ligand>
</feature>
<feature type="binding site" evidence="1">
    <location>
        <begin position="237"/>
        <end position="238"/>
    </location>
    <ligand>
        <name>pyridoxal 5'-phosphate</name>
        <dbReference type="ChEBI" id="CHEBI:597326"/>
    </ligand>
</feature>
<feature type="modified residue" description="N6-(pyridoxal phosphate)lysine" evidence="1">
    <location>
        <position position="196"/>
    </location>
</feature>
<proteinExistence type="inferred from homology"/>
<sequence length="360" mass="40330">MERVYNFSAGPSILPLPVLEKVQKELVNYNGTGMSIMEMSHRSSYFQSIIDEAGSLLRELMNIPDEYEVLFLQGGASLQFSMIPLNVMNTYKKAGYILTGSWSKKAMQEAEKVGEVQVIASSENEKFTTIPRLDGLLGDEKLDYVHITTNNTIEGTKYVDIPHVDKVPLVADMSSNILSERYDVSKFGLIYAGAQKNLGPAGLTIAIIKRDLIGGADRSCPTMLNYETYSKNNSLYNTPPSFSIYVTKLVLEWLKEQGGVSAIEEQNRMKSSLLYNFLDESKLFTSPVDPTYRSLMNIPFTTPSEELNSEFLQKAKERGLVTLKGHRSVGGMRASIYNAMPAEGVQQLVNYMKEFELENR</sequence>
<keyword id="KW-0028">Amino-acid biosynthesis</keyword>
<keyword id="KW-0032">Aminotransferase</keyword>
<keyword id="KW-0963">Cytoplasm</keyword>
<keyword id="KW-0663">Pyridoxal phosphate</keyword>
<keyword id="KW-0718">Serine biosynthesis</keyword>
<keyword id="KW-0808">Transferase</keyword>
<comment type="function">
    <text evidence="1">Catalyzes the reversible conversion of 3-phosphohydroxypyruvate to phosphoserine and of 3-hydroxy-2-oxo-4-phosphonooxybutanoate to phosphohydroxythreonine.</text>
</comment>
<comment type="catalytic activity">
    <reaction evidence="1">
        <text>O-phospho-L-serine + 2-oxoglutarate = 3-phosphooxypyruvate + L-glutamate</text>
        <dbReference type="Rhea" id="RHEA:14329"/>
        <dbReference type="ChEBI" id="CHEBI:16810"/>
        <dbReference type="ChEBI" id="CHEBI:18110"/>
        <dbReference type="ChEBI" id="CHEBI:29985"/>
        <dbReference type="ChEBI" id="CHEBI:57524"/>
        <dbReference type="EC" id="2.6.1.52"/>
    </reaction>
</comment>
<comment type="catalytic activity">
    <reaction evidence="1">
        <text>4-(phosphooxy)-L-threonine + 2-oxoglutarate = (R)-3-hydroxy-2-oxo-4-phosphooxybutanoate + L-glutamate</text>
        <dbReference type="Rhea" id="RHEA:16573"/>
        <dbReference type="ChEBI" id="CHEBI:16810"/>
        <dbReference type="ChEBI" id="CHEBI:29985"/>
        <dbReference type="ChEBI" id="CHEBI:58452"/>
        <dbReference type="ChEBI" id="CHEBI:58538"/>
        <dbReference type="EC" id="2.6.1.52"/>
    </reaction>
</comment>
<comment type="cofactor">
    <cofactor evidence="1">
        <name>pyridoxal 5'-phosphate</name>
        <dbReference type="ChEBI" id="CHEBI:597326"/>
    </cofactor>
    <text evidence="1">Binds 1 pyridoxal phosphate per subunit.</text>
</comment>
<comment type="pathway">
    <text evidence="1">Amino-acid biosynthesis; L-serine biosynthesis; L-serine from 3-phospho-D-glycerate: step 2/3.</text>
</comment>
<comment type="subunit">
    <text evidence="1">Homodimer.</text>
</comment>
<comment type="subcellular location">
    <subcellularLocation>
        <location evidence="1">Cytoplasm</location>
    </subcellularLocation>
</comment>
<comment type="similarity">
    <text evidence="1">Belongs to the class-V pyridoxal-phosphate-dependent aminotransferase family. SerC subfamily.</text>
</comment>
<organism>
    <name type="scientific">Bacillus cereus (strain ATCC 10987 / NRS 248)</name>
    <dbReference type="NCBI Taxonomy" id="222523"/>
    <lineage>
        <taxon>Bacteria</taxon>
        <taxon>Bacillati</taxon>
        <taxon>Bacillota</taxon>
        <taxon>Bacilli</taxon>
        <taxon>Bacillales</taxon>
        <taxon>Bacillaceae</taxon>
        <taxon>Bacillus</taxon>
        <taxon>Bacillus cereus group</taxon>
    </lineage>
</organism>
<gene>
    <name evidence="1" type="primary">serC</name>
    <name type="ordered locus">BCE_3285</name>
</gene>
<protein>
    <recommendedName>
        <fullName evidence="1">Phosphoserine aminotransferase</fullName>
        <ecNumber evidence="1">2.6.1.52</ecNumber>
    </recommendedName>
    <alternativeName>
        <fullName evidence="1">Phosphohydroxythreonine aminotransferase</fullName>
        <shortName evidence="1">PSAT</shortName>
    </alternativeName>
</protein>
<dbReference type="EC" id="2.6.1.52" evidence="1"/>
<dbReference type="EMBL" id="AE017194">
    <property type="protein sequence ID" value="AAS42193.1"/>
    <property type="molecule type" value="Genomic_DNA"/>
</dbReference>
<dbReference type="SMR" id="Q734W9"/>
<dbReference type="KEGG" id="bca:BCE_3285"/>
<dbReference type="HOGENOM" id="CLU_034866_0_2_9"/>
<dbReference type="UniPathway" id="UPA00135">
    <property type="reaction ID" value="UER00197"/>
</dbReference>
<dbReference type="Proteomes" id="UP000002527">
    <property type="component" value="Chromosome"/>
</dbReference>
<dbReference type="GO" id="GO:0005737">
    <property type="term" value="C:cytoplasm"/>
    <property type="evidence" value="ECO:0007669"/>
    <property type="project" value="UniProtKB-SubCell"/>
</dbReference>
<dbReference type="GO" id="GO:0004648">
    <property type="term" value="F:O-phospho-L-serine:2-oxoglutarate aminotransferase activity"/>
    <property type="evidence" value="ECO:0007669"/>
    <property type="project" value="UniProtKB-UniRule"/>
</dbReference>
<dbReference type="GO" id="GO:0030170">
    <property type="term" value="F:pyridoxal phosphate binding"/>
    <property type="evidence" value="ECO:0007669"/>
    <property type="project" value="UniProtKB-UniRule"/>
</dbReference>
<dbReference type="GO" id="GO:0006564">
    <property type="term" value="P:L-serine biosynthetic process"/>
    <property type="evidence" value="ECO:0007669"/>
    <property type="project" value="UniProtKB-UniRule"/>
</dbReference>
<dbReference type="CDD" id="cd00611">
    <property type="entry name" value="PSAT_like"/>
    <property type="match status" value="1"/>
</dbReference>
<dbReference type="FunFam" id="3.40.640.10:FF:000010">
    <property type="entry name" value="Phosphoserine aminotransferase"/>
    <property type="match status" value="1"/>
</dbReference>
<dbReference type="FunFam" id="3.90.1150.10:FF:000006">
    <property type="entry name" value="Phosphoserine aminotransferase"/>
    <property type="match status" value="1"/>
</dbReference>
<dbReference type="Gene3D" id="3.90.1150.10">
    <property type="entry name" value="Aspartate Aminotransferase, domain 1"/>
    <property type="match status" value="1"/>
</dbReference>
<dbReference type="Gene3D" id="3.40.640.10">
    <property type="entry name" value="Type I PLP-dependent aspartate aminotransferase-like (Major domain)"/>
    <property type="match status" value="1"/>
</dbReference>
<dbReference type="HAMAP" id="MF_00160">
    <property type="entry name" value="SerC_aminotrans_5"/>
    <property type="match status" value="1"/>
</dbReference>
<dbReference type="InterPro" id="IPR000192">
    <property type="entry name" value="Aminotrans_V_dom"/>
</dbReference>
<dbReference type="InterPro" id="IPR020578">
    <property type="entry name" value="Aminotrans_V_PyrdxlP_BS"/>
</dbReference>
<dbReference type="InterPro" id="IPR022278">
    <property type="entry name" value="Pser_aminoTfrase"/>
</dbReference>
<dbReference type="InterPro" id="IPR015424">
    <property type="entry name" value="PyrdxlP-dep_Trfase"/>
</dbReference>
<dbReference type="InterPro" id="IPR015421">
    <property type="entry name" value="PyrdxlP-dep_Trfase_major"/>
</dbReference>
<dbReference type="InterPro" id="IPR015422">
    <property type="entry name" value="PyrdxlP-dep_Trfase_small"/>
</dbReference>
<dbReference type="NCBIfam" id="NF003764">
    <property type="entry name" value="PRK05355.1"/>
    <property type="match status" value="1"/>
</dbReference>
<dbReference type="NCBIfam" id="TIGR01364">
    <property type="entry name" value="serC_1"/>
    <property type="match status" value="1"/>
</dbReference>
<dbReference type="PANTHER" id="PTHR43247">
    <property type="entry name" value="PHOSPHOSERINE AMINOTRANSFERASE"/>
    <property type="match status" value="1"/>
</dbReference>
<dbReference type="PANTHER" id="PTHR43247:SF1">
    <property type="entry name" value="PHOSPHOSERINE AMINOTRANSFERASE"/>
    <property type="match status" value="1"/>
</dbReference>
<dbReference type="Pfam" id="PF00266">
    <property type="entry name" value="Aminotran_5"/>
    <property type="match status" value="1"/>
</dbReference>
<dbReference type="PIRSF" id="PIRSF000525">
    <property type="entry name" value="SerC"/>
    <property type="match status" value="1"/>
</dbReference>
<dbReference type="SUPFAM" id="SSF53383">
    <property type="entry name" value="PLP-dependent transferases"/>
    <property type="match status" value="1"/>
</dbReference>
<dbReference type="PROSITE" id="PS00595">
    <property type="entry name" value="AA_TRANSFER_CLASS_5"/>
    <property type="match status" value="1"/>
</dbReference>
<accession>Q734W9</accession>
<name>SERC_BACC1</name>
<reference key="1">
    <citation type="journal article" date="2004" name="Nucleic Acids Res.">
        <title>The genome sequence of Bacillus cereus ATCC 10987 reveals metabolic adaptations and a large plasmid related to Bacillus anthracis pXO1.</title>
        <authorList>
            <person name="Rasko D.A."/>
            <person name="Ravel J."/>
            <person name="Oekstad O.A."/>
            <person name="Helgason E."/>
            <person name="Cer R.Z."/>
            <person name="Jiang L."/>
            <person name="Shores K.A."/>
            <person name="Fouts D.E."/>
            <person name="Tourasse N.J."/>
            <person name="Angiuoli S.V."/>
            <person name="Kolonay J.F."/>
            <person name="Nelson W.C."/>
            <person name="Kolstoe A.-B."/>
            <person name="Fraser C.M."/>
            <person name="Read T.D."/>
        </authorList>
    </citation>
    <scope>NUCLEOTIDE SEQUENCE [LARGE SCALE GENOMIC DNA]</scope>
    <source>
        <strain>ATCC 10987 / NRS 248</strain>
    </source>
</reference>
<evidence type="ECO:0000255" key="1">
    <source>
        <dbReference type="HAMAP-Rule" id="MF_00160"/>
    </source>
</evidence>